<comment type="function">
    <text evidence="1">Part of the Sec protein translocase complex. Interacts with the SecYEG preprotein conducting channel. Has a central role in coupling the hydrolysis of ATP to the transfer of proteins into and across the cell membrane, serving both as a receptor for the preprotein-SecB complex and as an ATP-driven molecular motor driving the stepwise translocation of polypeptide chains across the membrane.</text>
</comment>
<comment type="catalytic activity">
    <reaction evidence="1">
        <text>ATP + H2O + cellular proteinSide 1 = ADP + phosphate + cellular proteinSide 2.</text>
        <dbReference type="EC" id="7.4.2.8"/>
    </reaction>
</comment>
<comment type="cofactor">
    <cofactor evidence="1">
        <name>Zn(2+)</name>
        <dbReference type="ChEBI" id="CHEBI:29105"/>
    </cofactor>
    <text evidence="1">May bind 1 zinc ion per subunit.</text>
</comment>
<comment type="subunit">
    <text evidence="1">Monomer and homodimer. Part of the essential Sec protein translocation apparatus which comprises SecA, SecYEG and auxiliary proteins SecDF-YajC and YidC.</text>
</comment>
<comment type="subcellular location">
    <subcellularLocation>
        <location evidence="1">Cell inner membrane</location>
        <topology evidence="1">Peripheral membrane protein</topology>
        <orientation evidence="1">Cytoplasmic side</orientation>
    </subcellularLocation>
    <subcellularLocation>
        <location evidence="1">Cytoplasm</location>
    </subcellularLocation>
    <text evidence="1">Distribution is 50-50.</text>
</comment>
<comment type="similarity">
    <text evidence="1">Belongs to the SecA family.</text>
</comment>
<proteinExistence type="inferred from homology"/>
<dbReference type="EC" id="7.4.2.8" evidence="1"/>
<dbReference type="EMBL" id="CU633749">
    <property type="protein sequence ID" value="CAQ70650.1"/>
    <property type="molecule type" value="Genomic_DNA"/>
</dbReference>
<dbReference type="RefSeq" id="WP_012353945.1">
    <property type="nucleotide sequence ID" value="NC_010528.1"/>
</dbReference>
<dbReference type="SMR" id="B3R6V0"/>
<dbReference type="GeneID" id="29761388"/>
<dbReference type="KEGG" id="cti:RALTA_A2720"/>
<dbReference type="eggNOG" id="COG0653">
    <property type="taxonomic scope" value="Bacteria"/>
</dbReference>
<dbReference type="HOGENOM" id="CLU_005314_3_0_4"/>
<dbReference type="BioCyc" id="CTAI977880:RALTA_RS13235-MONOMER"/>
<dbReference type="Proteomes" id="UP000001692">
    <property type="component" value="Chromosome 1"/>
</dbReference>
<dbReference type="GO" id="GO:0031522">
    <property type="term" value="C:cell envelope Sec protein transport complex"/>
    <property type="evidence" value="ECO:0007669"/>
    <property type="project" value="TreeGrafter"/>
</dbReference>
<dbReference type="GO" id="GO:0005829">
    <property type="term" value="C:cytosol"/>
    <property type="evidence" value="ECO:0007669"/>
    <property type="project" value="TreeGrafter"/>
</dbReference>
<dbReference type="GO" id="GO:0005886">
    <property type="term" value="C:plasma membrane"/>
    <property type="evidence" value="ECO:0007669"/>
    <property type="project" value="UniProtKB-SubCell"/>
</dbReference>
<dbReference type="GO" id="GO:0005524">
    <property type="term" value="F:ATP binding"/>
    <property type="evidence" value="ECO:0007669"/>
    <property type="project" value="UniProtKB-UniRule"/>
</dbReference>
<dbReference type="GO" id="GO:0046872">
    <property type="term" value="F:metal ion binding"/>
    <property type="evidence" value="ECO:0007669"/>
    <property type="project" value="UniProtKB-KW"/>
</dbReference>
<dbReference type="GO" id="GO:0008564">
    <property type="term" value="F:protein-exporting ATPase activity"/>
    <property type="evidence" value="ECO:0007669"/>
    <property type="project" value="UniProtKB-EC"/>
</dbReference>
<dbReference type="GO" id="GO:0065002">
    <property type="term" value="P:intracellular protein transmembrane transport"/>
    <property type="evidence" value="ECO:0007669"/>
    <property type="project" value="UniProtKB-UniRule"/>
</dbReference>
<dbReference type="GO" id="GO:0017038">
    <property type="term" value="P:protein import"/>
    <property type="evidence" value="ECO:0007669"/>
    <property type="project" value="InterPro"/>
</dbReference>
<dbReference type="GO" id="GO:0006605">
    <property type="term" value="P:protein targeting"/>
    <property type="evidence" value="ECO:0007669"/>
    <property type="project" value="UniProtKB-UniRule"/>
</dbReference>
<dbReference type="GO" id="GO:0043952">
    <property type="term" value="P:protein transport by the Sec complex"/>
    <property type="evidence" value="ECO:0007669"/>
    <property type="project" value="TreeGrafter"/>
</dbReference>
<dbReference type="CDD" id="cd17928">
    <property type="entry name" value="DEXDc_SecA"/>
    <property type="match status" value="1"/>
</dbReference>
<dbReference type="CDD" id="cd18803">
    <property type="entry name" value="SF2_C_secA"/>
    <property type="match status" value="1"/>
</dbReference>
<dbReference type="FunFam" id="3.40.50.300:FF:000081">
    <property type="entry name" value="Preprotein translocase subunit SecA"/>
    <property type="match status" value="1"/>
</dbReference>
<dbReference type="FunFam" id="3.40.50.300:FF:000113">
    <property type="entry name" value="Preprotein translocase subunit SecA"/>
    <property type="match status" value="1"/>
</dbReference>
<dbReference type="FunFam" id="3.90.1440.10:FF:000001">
    <property type="entry name" value="Preprotein translocase subunit SecA"/>
    <property type="match status" value="1"/>
</dbReference>
<dbReference type="FunFam" id="1.10.3060.10:FF:000003">
    <property type="entry name" value="Protein translocase subunit SecA"/>
    <property type="match status" value="1"/>
</dbReference>
<dbReference type="Gene3D" id="1.10.3060.10">
    <property type="entry name" value="Helical scaffold and wing domains of SecA"/>
    <property type="match status" value="1"/>
</dbReference>
<dbReference type="Gene3D" id="3.40.50.300">
    <property type="entry name" value="P-loop containing nucleotide triphosphate hydrolases"/>
    <property type="match status" value="2"/>
</dbReference>
<dbReference type="Gene3D" id="3.90.1440.10">
    <property type="entry name" value="SecA, preprotein cross-linking domain"/>
    <property type="match status" value="1"/>
</dbReference>
<dbReference type="HAMAP" id="MF_01382">
    <property type="entry name" value="SecA"/>
    <property type="match status" value="1"/>
</dbReference>
<dbReference type="InterPro" id="IPR014001">
    <property type="entry name" value="Helicase_ATP-bd"/>
</dbReference>
<dbReference type="InterPro" id="IPR001650">
    <property type="entry name" value="Helicase_C-like"/>
</dbReference>
<dbReference type="InterPro" id="IPR027417">
    <property type="entry name" value="P-loop_NTPase"/>
</dbReference>
<dbReference type="InterPro" id="IPR004027">
    <property type="entry name" value="SEC_C_motif"/>
</dbReference>
<dbReference type="InterPro" id="IPR000185">
    <property type="entry name" value="SecA"/>
</dbReference>
<dbReference type="InterPro" id="IPR020937">
    <property type="entry name" value="SecA_CS"/>
</dbReference>
<dbReference type="InterPro" id="IPR011115">
    <property type="entry name" value="SecA_DEAD"/>
</dbReference>
<dbReference type="InterPro" id="IPR014018">
    <property type="entry name" value="SecA_motor_DEAD"/>
</dbReference>
<dbReference type="InterPro" id="IPR011130">
    <property type="entry name" value="SecA_preprotein_X-link_dom"/>
</dbReference>
<dbReference type="InterPro" id="IPR044722">
    <property type="entry name" value="SecA_SF2_C"/>
</dbReference>
<dbReference type="InterPro" id="IPR011116">
    <property type="entry name" value="SecA_Wing/Scaffold"/>
</dbReference>
<dbReference type="InterPro" id="IPR036266">
    <property type="entry name" value="SecA_Wing/Scaffold_sf"/>
</dbReference>
<dbReference type="InterPro" id="IPR036670">
    <property type="entry name" value="SecA_X-link_sf"/>
</dbReference>
<dbReference type="NCBIfam" id="NF009538">
    <property type="entry name" value="PRK12904.1"/>
    <property type="match status" value="1"/>
</dbReference>
<dbReference type="NCBIfam" id="TIGR00963">
    <property type="entry name" value="secA"/>
    <property type="match status" value="1"/>
</dbReference>
<dbReference type="PANTHER" id="PTHR30612:SF0">
    <property type="entry name" value="CHLOROPLAST PROTEIN-TRANSPORTING ATPASE"/>
    <property type="match status" value="1"/>
</dbReference>
<dbReference type="PANTHER" id="PTHR30612">
    <property type="entry name" value="SECA INNER MEMBRANE COMPONENT OF SEC PROTEIN SECRETION SYSTEM"/>
    <property type="match status" value="1"/>
</dbReference>
<dbReference type="Pfam" id="PF21090">
    <property type="entry name" value="P-loop_SecA"/>
    <property type="match status" value="1"/>
</dbReference>
<dbReference type="Pfam" id="PF02810">
    <property type="entry name" value="SEC-C"/>
    <property type="match status" value="1"/>
</dbReference>
<dbReference type="Pfam" id="PF07517">
    <property type="entry name" value="SecA_DEAD"/>
    <property type="match status" value="1"/>
</dbReference>
<dbReference type="Pfam" id="PF01043">
    <property type="entry name" value="SecA_PP_bind"/>
    <property type="match status" value="1"/>
</dbReference>
<dbReference type="Pfam" id="PF07516">
    <property type="entry name" value="SecA_SW"/>
    <property type="match status" value="1"/>
</dbReference>
<dbReference type="PRINTS" id="PR00906">
    <property type="entry name" value="SECA"/>
</dbReference>
<dbReference type="SMART" id="SM00957">
    <property type="entry name" value="SecA_DEAD"/>
    <property type="match status" value="1"/>
</dbReference>
<dbReference type="SMART" id="SM00958">
    <property type="entry name" value="SecA_PP_bind"/>
    <property type="match status" value="1"/>
</dbReference>
<dbReference type="SUPFAM" id="SSF81886">
    <property type="entry name" value="Helical scaffold and wing domains of SecA"/>
    <property type="match status" value="1"/>
</dbReference>
<dbReference type="SUPFAM" id="SSF52540">
    <property type="entry name" value="P-loop containing nucleoside triphosphate hydrolases"/>
    <property type="match status" value="2"/>
</dbReference>
<dbReference type="SUPFAM" id="SSF81767">
    <property type="entry name" value="Pre-protein crosslinking domain of SecA"/>
    <property type="match status" value="1"/>
</dbReference>
<dbReference type="PROSITE" id="PS01312">
    <property type="entry name" value="SECA"/>
    <property type="match status" value="1"/>
</dbReference>
<dbReference type="PROSITE" id="PS51196">
    <property type="entry name" value="SECA_MOTOR_DEAD"/>
    <property type="match status" value="1"/>
</dbReference>
<evidence type="ECO:0000255" key="1">
    <source>
        <dbReference type="HAMAP-Rule" id="MF_01382"/>
    </source>
</evidence>
<organism>
    <name type="scientific">Cupriavidus taiwanensis (strain DSM 17343 / BCRC 17206 / CCUG 44338 / CIP 107171 / LMG 19424 / R1)</name>
    <name type="common">Ralstonia taiwanensis (strain LMG 19424)</name>
    <dbReference type="NCBI Taxonomy" id="977880"/>
    <lineage>
        <taxon>Bacteria</taxon>
        <taxon>Pseudomonadati</taxon>
        <taxon>Pseudomonadota</taxon>
        <taxon>Betaproteobacteria</taxon>
        <taxon>Burkholderiales</taxon>
        <taxon>Burkholderiaceae</taxon>
        <taxon>Cupriavidus</taxon>
    </lineage>
</organism>
<feature type="chain" id="PRO_1000144998" description="Protein translocase subunit SecA">
    <location>
        <begin position="1"/>
        <end position="925"/>
    </location>
</feature>
<feature type="binding site" evidence="1">
    <location>
        <position position="87"/>
    </location>
    <ligand>
        <name>ATP</name>
        <dbReference type="ChEBI" id="CHEBI:30616"/>
    </ligand>
</feature>
<feature type="binding site" evidence="1">
    <location>
        <begin position="105"/>
        <end position="109"/>
    </location>
    <ligand>
        <name>ATP</name>
        <dbReference type="ChEBI" id="CHEBI:30616"/>
    </ligand>
</feature>
<feature type="binding site" evidence="1">
    <location>
        <position position="515"/>
    </location>
    <ligand>
        <name>ATP</name>
        <dbReference type="ChEBI" id="CHEBI:30616"/>
    </ligand>
</feature>
<feature type="binding site" evidence="1">
    <location>
        <position position="909"/>
    </location>
    <ligand>
        <name>Zn(2+)</name>
        <dbReference type="ChEBI" id="CHEBI:29105"/>
    </ligand>
</feature>
<feature type="binding site" evidence="1">
    <location>
        <position position="911"/>
    </location>
    <ligand>
        <name>Zn(2+)</name>
        <dbReference type="ChEBI" id="CHEBI:29105"/>
    </ligand>
</feature>
<feature type="binding site" evidence="1">
    <location>
        <position position="920"/>
    </location>
    <ligand>
        <name>Zn(2+)</name>
        <dbReference type="ChEBI" id="CHEBI:29105"/>
    </ligand>
</feature>
<feature type="binding site" evidence="1">
    <location>
        <position position="921"/>
    </location>
    <ligand>
        <name>Zn(2+)</name>
        <dbReference type="ChEBI" id="CHEBI:29105"/>
    </ligand>
</feature>
<accession>B3R6V0</accession>
<protein>
    <recommendedName>
        <fullName evidence="1">Protein translocase subunit SecA</fullName>
        <ecNumber evidence="1">7.4.2.8</ecNumber>
    </recommendedName>
</protein>
<keyword id="KW-0067">ATP-binding</keyword>
<keyword id="KW-0997">Cell inner membrane</keyword>
<keyword id="KW-1003">Cell membrane</keyword>
<keyword id="KW-0963">Cytoplasm</keyword>
<keyword id="KW-0472">Membrane</keyword>
<keyword id="KW-0479">Metal-binding</keyword>
<keyword id="KW-0547">Nucleotide-binding</keyword>
<keyword id="KW-0653">Protein transport</keyword>
<keyword id="KW-1278">Translocase</keyword>
<keyword id="KW-0811">Translocation</keyword>
<keyword id="KW-0813">Transport</keyword>
<keyword id="KW-0862">Zinc</keyword>
<reference key="1">
    <citation type="journal article" date="2008" name="Genome Res.">
        <title>Genome sequence of the beta-rhizobium Cupriavidus taiwanensis and comparative genomics of rhizobia.</title>
        <authorList>
            <person name="Amadou C."/>
            <person name="Pascal G."/>
            <person name="Mangenot S."/>
            <person name="Glew M."/>
            <person name="Bontemps C."/>
            <person name="Capela D."/>
            <person name="Carrere S."/>
            <person name="Cruveiller S."/>
            <person name="Dossat C."/>
            <person name="Lajus A."/>
            <person name="Marchetti M."/>
            <person name="Poinsot V."/>
            <person name="Rouy Z."/>
            <person name="Servin B."/>
            <person name="Saad M."/>
            <person name="Schenowitz C."/>
            <person name="Barbe V."/>
            <person name="Batut J."/>
            <person name="Medigue C."/>
            <person name="Masson-Boivin C."/>
        </authorList>
    </citation>
    <scope>NUCLEOTIDE SEQUENCE [LARGE SCALE GENOMIC DNA]</scope>
    <source>
        <strain>DSM 17343 / BCRC 17206 / CCUG 44338 / CIP 107171 / LMG 19424 / R1</strain>
    </source>
</reference>
<gene>
    <name evidence="1" type="primary">secA</name>
    <name type="ordered locus">RALTA_A2720</name>
</gene>
<name>SECA_CUPTR</name>
<sequence>MITGLLKKVFGSRNERLIKQYRRTVAQINALEPKFEQLSDDELRGMTEAFRQRHAGGESLEALLPEAFAVCREASKRVMKMRHFDVQLIGGMVLNDNKIAEMRTGEGKTLTATLAVYLNAITGKGVHVVTVNDYLAQRDAEWMGRLYNFLGLSVGVNLSQMAHDQKQAAYNADITYGTNNEFGFDYLRDNMVYDPSQRVQRPLHYAIVDEVDSILIDEARTPLIISGQAENQTDLYQRMNGIPKLLERQIGEEKADGTGVEKPGDYYVDEKGHQVYLTEAGHEKAEEILSQLGLIGEGESLYAPQNITLMHHLYAALRAHSLFHRDQHYVVQNDEVVIVDEFTGRLMTGRRWSDGLHQAVEAKEGVTVQQENQTLATVTFQNYFRMYEKLAGMTGTADTEAYEFQEIYGLEVVVIPTNRPTQRKDLQDQIYKTGKERYDAVVRDIRDCYERGQPVLVGTTSIETSEYLSGLLDREQLPHQVLNAKQHAREAEIVAQAGRPKMITIATNMAGRGTDIVLGGNVEKQAGFIEADPNLSDADKAARIQQLKDEWQSLHEQVKAAGGLHIVGTERHESRRIDNQLRGRAGRQGDPGSSRFYLSLDDQLLRIFAGDRVRAIMERLKMPEGEPIEAGIVTRSIESAQRKVEGRNFDIRKQLLQYDDVANDQRKEIYKLRNDVLEANDVGEMVANLRESVLIELFRDHVPADTMEEQWNIAGLETRLREDWGLEVPLAKTIEGAQSIEDEELLNLIMKAATERYESKVAMVGRESFAGFERSVMLQSIDTHWREHLAALDHLRQGIHLRGYAQKDPKQEYKRESFELFARLLDVIKNEVTRVTFNVQIQSPEELEQASEQIEEGLSHLENVQYKHDEFAEGREPVEEAPSPRTGTAMAAAELALAGMPKVGRNDPCPCGSGKKFKQCHGKLS</sequence>